<evidence type="ECO:0000250" key="1">
    <source>
        <dbReference type="UniProtKB" id="P9WKC9"/>
    </source>
</evidence>
<evidence type="ECO:0000255" key="2"/>
<evidence type="ECO:0000256" key="3">
    <source>
        <dbReference type="SAM" id="MobiDB-lite"/>
    </source>
</evidence>
<evidence type="ECO:0000305" key="4"/>
<name>Y3371_MYCTO</name>
<organism>
    <name type="scientific">Mycobacterium tuberculosis (strain CDC 1551 / Oshkosh)</name>
    <dbReference type="NCBI Taxonomy" id="83331"/>
    <lineage>
        <taxon>Bacteria</taxon>
        <taxon>Bacillati</taxon>
        <taxon>Actinomycetota</taxon>
        <taxon>Actinomycetes</taxon>
        <taxon>Mycobacteriales</taxon>
        <taxon>Mycobacteriaceae</taxon>
        <taxon>Mycobacterium</taxon>
        <taxon>Mycobacterium tuberculosis complex</taxon>
    </lineage>
</organism>
<comment type="catalytic activity">
    <reaction evidence="1">
        <text>an acyl-CoA + a 1,2-diacyl-sn-glycerol = a triacyl-sn-glycerol + CoA</text>
        <dbReference type="Rhea" id="RHEA:10868"/>
        <dbReference type="ChEBI" id="CHEBI:17815"/>
        <dbReference type="ChEBI" id="CHEBI:57287"/>
        <dbReference type="ChEBI" id="CHEBI:58342"/>
        <dbReference type="ChEBI" id="CHEBI:64615"/>
        <dbReference type="EC" id="2.3.1.20"/>
    </reaction>
</comment>
<comment type="pathway">
    <text>Glycerolipid metabolism; triacylglycerol biosynthesis.</text>
</comment>
<comment type="similarity">
    <text evidence="4">Belongs to the long-chain O-acyltransferase family.</text>
</comment>
<keyword id="KW-0012">Acyltransferase</keyword>
<keyword id="KW-0319">Glycerol metabolism</keyword>
<keyword id="KW-0444">Lipid biosynthesis</keyword>
<keyword id="KW-0443">Lipid metabolism</keyword>
<keyword id="KW-1185">Reference proteome</keyword>
<keyword id="KW-0808">Transferase</keyword>
<protein>
    <recommendedName>
        <fullName>Putative diacyglycerol O-acyltransferase MT3481</fullName>
        <ecNumber evidence="1">2.3.1.20</ecNumber>
    </recommendedName>
    <alternativeName>
        <fullName>Putative triacylglycerol synthase MT3481</fullName>
    </alternativeName>
</protein>
<reference key="1">
    <citation type="journal article" date="2002" name="J. Bacteriol.">
        <title>Whole-genome comparison of Mycobacterium tuberculosis clinical and laboratory strains.</title>
        <authorList>
            <person name="Fleischmann R.D."/>
            <person name="Alland D."/>
            <person name="Eisen J.A."/>
            <person name="Carpenter L."/>
            <person name="White O."/>
            <person name="Peterson J.D."/>
            <person name="DeBoy R.T."/>
            <person name="Dodson R.J."/>
            <person name="Gwinn M.L."/>
            <person name="Haft D.H."/>
            <person name="Hickey E.K."/>
            <person name="Kolonay J.F."/>
            <person name="Nelson W.C."/>
            <person name="Umayam L.A."/>
            <person name="Ermolaeva M.D."/>
            <person name="Salzberg S.L."/>
            <person name="Delcher A."/>
            <person name="Utterback T.R."/>
            <person name="Weidman J.F."/>
            <person name="Khouri H.M."/>
            <person name="Gill J."/>
            <person name="Mikula A."/>
            <person name="Bishai W."/>
            <person name="Jacobs W.R. Jr."/>
            <person name="Venter J.C."/>
            <person name="Fraser C.M."/>
        </authorList>
    </citation>
    <scope>NUCLEOTIDE SEQUENCE [LARGE SCALE GENOMIC DNA]</scope>
    <source>
        <strain>CDC 1551 / Oshkosh</strain>
    </source>
</reference>
<dbReference type="EC" id="2.3.1.20" evidence="1"/>
<dbReference type="EMBL" id="AE000516">
    <property type="protein sequence ID" value="AAK47818.1"/>
    <property type="molecule type" value="Genomic_DNA"/>
</dbReference>
<dbReference type="PIR" id="B70972">
    <property type="entry name" value="B70972"/>
</dbReference>
<dbReference type="RefSeq" id="WP_010924648.1">
    <property type="nucleotide sequence ID" value="NC_002755.2"/>
</dbReference>
<dbReference type="SMR" id="P9WKA8"/>
<dbReference type="KEGG" id="mtc:MT3481"/>
<dbReference type="HOGENOM" id="CLU_024186_3_1_11"/>
<dbReference type="UniPathway" id="UPA00282"/>
<dbReference type="Proteomes" id="UP000001020">
    <property type="component" value="Chromosome"/>
</dbReference>
<dbReference type="GO" id="GO:0005886">
    <property type="term" value="C:plasma membrane"/>
    <property type="evidence" value="ECO:0007669"/>
    <property type="project" value="TreeGrafter"/>
</dbReference>
<dbReference type="GO" id="GO:0004144">
    <property type="term" value="F:diacylglycerol O-acyltransferase activity"/>
    <property type="evidence" value="ECO:0007669"/>
    <property type="project" value="UniProtKB-EC"/>
</dbReference>
<dbReference type="GO" id="GO:0051701">
    <property type="term" value="P:biological process involved in interaction with host"/>
    <property type="evidence" value="ECO:0007669"/>
    <property type="project" value="TreeGrafter"/>
</dbReference>
<dbReference type="GO" id="GO:0006071">
    <property type="term" value="P:glycerol metabolic process"/>
    <property type="evidence" value="ECO:0007669"/>
    <property type="project" value="UniProtKB-KW"/>
</dbReference>
<dbReference type="GO" id="GO:0001666">
    <property type="term" value="P:response to hypoxia"/>
    <property type="evidence" value="ECO:0007669"/>
    <property type="project" value="TreeGrafter"/>
</dbReference>
<dbReference type="GO" id="GO:0071731">
    <property type="term" value="P:response to nitric oxide"/>
    <property type="evidence" value="ECO:0007669"/>
    <property type="project" value="TreeGrafter"/>
</dbReference>
<dbReference type="GO" id="GO:0019432">
    <property type="term" value="P:triglyceride biosynthetic process"/>
    <property type="evidence" value="ECO:0007669"/>
    <property type="project" value="UniProtKB-UniPathway"/>
</dbReference>
<dbReference type="Gene3D" id="3.30.559.10">
    <property type="entry name" value="Chloramphenicol acetyltransferase-like domain"/>
    <property type="match status" value="1"/>
</dbReference>
<dbReference type="InterPro" id="IPR014292">
    <property type="entry name" value="Acyl_transf_WS/DGAT"/>
</dbReference>
<dbReference type="InterPro" id="IPR023213">
    <property type="entry name" value="CAT-like_dom_sf"/>
</dbReference>
<dbReference type="InterPro" id="IPR045034">
    <property type="entry name" value="O-acyltransferase_WSD1-like"/>
</dbReference>
<dbReference type="InterPro" id="IPR009721">
    <property type="entry name" value="O-acyltransferase_WSD1_C"/>
</dbReference>
<dbReference type="InterPro" id="IPR004255">
    <property type="entry name" value="O-acyltransferase_WSD1_N"/>
</dbReference>
<dbReference type="NCBIfam" id="TIGR02946">
    <property type="entry name" value="acyl_WS_DGAT"/>
    <property type="match status" value="1"/>
</dbReference>
<dbReference type="PANTHER" id="PTHR31650">
    <property type="entry name" value="O-ACYLTRANSFERASE (WSD1-LIKE) FAMILY PROTEIN"/>
    <property type="match status" value="1"/>
</dbReference>
<dbReference type="PANTHER" id="PTHR31650:SF1">
    <property type="entry name" value="WAX ESTER SYNTHASE_DIACYLGLYCEROL ACYLTRANSFERASE 4-RELATED"/>
    <property type="match status" value="1"/>
</dbReference>
<dbReference type="Pfam" id="PF06974">
    <property type="entry name" value="WS_DGAT_C"/>
    <property type="match status" value="1"/>
</dbReference>
<dbReference type="Pfam" id="PF03007">
    <property type="entry name" value="WS_DGAT_cat"/>
    <property type="match status" value="1"/>
</dbReference>
<dbReference type="SUPFAM" id="SSF52777">
    <property type="entry name" value="CoA-dependent acyltransferases"/>
    <property type="match status" value="1"/>
</dbReference>
<proteinExistence type="inferred from homology"/>
<gene>
    <name type="ordered locus">MT3481</name>
</gene>
<feature type="chain" id="PRO_0000427686" description="Putative diacyglycerol O-acyltransferase MT3481">
    <location>
        <begin position="1"/>
        <end position="446"/>
    </location>
</feature>
<feature type="region of interest" description="Disordered" evidence="3">
    <location>
        <begin position="425"/>
        <end position="446"/>
    </location>
</feature>
<feature type="active site" description="Proton acceptor" evidence="2">
    <location>
        <position position="129"/>
    </location>
</feature>
<sequence>MAQLTALDAGFLKSRDPERHPGLAIGAVAVVNGAAPSYDQLKTVLTERIKSIPRCTQVLATEWIDYPGFDLTQHVRRVALPRPGDEAELFRAIALALERPLDPDRPLWECWIIEGLNGNRWAILIKIHHCMAGAMSAAHLLARLCDDADGSAFANNVDIKQIPPYGDARSWAETLWRMSVSIAGAVCTAAARAVSWPAVTSPAGPVTTRRRYQAVRVPRDAVDAVCHKFGVTANDVALAAITEGFRTVLLHRGQQPRADSLRTLEKTDGSSAMLPYLPVEYDDPVRRLRTVHNRSQQSGRRQPDSLSDYTPLMLCAKMIHALARLPQQGIVTLATSAPRPRHQLRLMGQKMDQVLPIPPTALQLSTGIAVLSYGDELVFGITADYDAASEMQQLVNGIELGMARLVALSDDSVLLFTKDRRKASSRALPSAARRGRPSVPTARARH</sequence>
<accession>P9WKA8</accession>
<accession>L0TDY3</accession>
<accession>O50400</accession>